<proteinExistence type="evidence at transcript level"/>
<comment type="subcellular location">
    <subcellularLocation>
        <location evidence="1">Secreted</location>
    </subcellularLocation>
</comment>
<comment type="tissue specificity">
    <text>Expressed by the venom duct.</text>
</comment>
<comment type="domain">
    <text>The cysteine framework is V (CC-CC).</text>
</comment>
<comment type="PTM">
    <text evidence="3">Contains 2 disulfide bonds that can be either 'C1-C3, C2-C4' or 'C1-C4, C2-C3', since these disulfide connectivities have been observed for conotoxins with cysteine framework V (for examples, see AC P0DQQ7 and AC P81755).</text>
</comment>
<comment type="similarity">
    <text evidence="3">Belongs to the conotoxin T superfamily.</text>
</comment>
<name>CT51_CONQU</name>
<protein>
    <recommendedName>
        <fullName evidence="3">Conotoxin Qc5.1</fullName>
    </recommendedName>
</protein>
<accession>P0DJC4</accession>
<sequence length="62" mass="6883">MRCVPVFIILLLLSPSAPSVDAHPMTKDDVPQASFHDDAKRTLQVPWMKRGCCARLTCCVGR</sequence>
<evidence type="ECO:0000250" key="1"/>
<evidence type="ECO:0000255" key="2"/>
<evidence type="ECO:0000305" key="3"/>
<reference key="1">
    <citation type="patent" date="2002-11-05" number="JP2002536970">
        <title>Tau-conotoxin peptides.</title>
        <authorList>
            <person name="Walker C."/>
            <person name="Shetty R."/>
            <person name="Olivera B.M."/>
            <person name="Hooper D."/>
            <person name="Jacobsen R."/>
            <person name="Steele D."/>
            <person name="Jones R.M."/>
        </authorList>
    </citation>
    <scope>NUCLEOTIDE SEQUENCE</scope>
</reference>
<organism>
    <name type="scientific">Conus quercinus</name>
    <name type="common">Oak cone</name>
    <dbReference type="NCBI Taxonomy" id="101313"/>
    <lineage>
        <taxon>Eukaryota</taxon>
        <taxon>Metazoa</taxon>
        <taxon>Spiralia</taxon>
        <taxon>Lophotrochozoa</taxon>
        <taxon>Mollusca</taxon>
        <taxon>Gastropoda</taxon>
        <taxon>Caenogastropoda</taxon>
        <taxon>Neogastropoda</taxon>
        <taxon>Conoidea</taxon>
        <taxon>Conidae</taxon>
        <taxon>Conus</taxon>
        <taxon>Lividoconus</taxon>
    </lineage>
</organism>
<feature type="signal peptide" evidence="2">
    <location>
        <begin position="1"/>
        <end position="22"/>
    </location>
</feature>
<feature type="propeptide" id="PRO_0000415309" evidence="1">
    <location>
        <begin position="23"/>
        <end position="48"/>
    </location>
</feature>
<feature type="peptide" id="PRO_0000415310" description="Conotoxin Qc5.1">
    <location>
        <begin position="51"/>
        <end position="60"/>
    </location>
</feature>
<feature type="modified residue" description="Valine amide" evidence="1">
    <location>
        <position position="60"/>
    </location>
</feature>
<dbReference type="EMBL" id="BD270183">
    <property type="status" value="NOT_ANNOTATED_CDS"/>
    <property type="molecule type" value="Unassigned_DNA"/>
</dbReference>
<dbReference type="GO" id="GO:0005576">
    <property type="term" value="C:extracellular region"/>
    <property type="evidence" value="ECO:0007669"/>
    <property type="project" value="UniProtKB-SubCell"/>
</dbReference>
<dbReference type="GO" id="GO:0090729">
    <property type="term" value="F:toxin activity"/>
    <property type="evidence" value="ECO:0007669"/>
    <property type="project" value="UniProtKB-KW"/>
</dbReference>
<dbReference type="InterPro" id="IPR031565">
    <property type="entry name" value="T-conotoxin"/>
</dbReference>
<dbReference type="Pfam" id="PF16981">
    <property type="entry name" value="Chi-conotoxin"/>
    <property type="match status" value="1"/>
</dbReference>
<keyword id="KW-0027">Amidation</keyword>
<keyword id="KW-0165">Cleavage on pair of basic residues</keyword>
<keyword id="KW-1015">Disulfide bond</keyword>
<keyword id="KW-0528">Neurotoxin</keyword>
<keyword id="KW-0964">Secreted</keyword>
<keyword id="KW-0732">Signal</keyword>
<keyword id="KW-0800">Toxin</keyword>